<comment type="function">
    <text evidence="1">ATP-binding (A) component of a common energy-coupling factor (ECF) ABC-transporter complex. Unlike classic ABC transporters this ECF transporter provides the energy necessary to transport a number of different substrates.</text>
</comment>
<comment type="subunit">
    <text evidence="1">Forms a stable energy-coupling factor (ECF) transporter complex composed of 2 membrane-embedded substrate-binding proteins (S component), 2 ATP-binding proteins (A component) and 2 transmembrane proteins (T component).</text>
</comment>
<comment type="subcellular location">
    <subcellularLocation>
        <location evidence="1">Cell membrane</location>
        <topology evidence="1">Peripheral membrane protein</topology>
    </subcellularLocation>
</comment>
<comment type="similarity">
    <text evidence="1">Belongs to the ABC transporter superfamily. Energy-coupling factor EcfA family.</text>
</comment>
<name>ECFA2_STRSV</name>
<protein>
    <recommendedName>
        <fullName evidence="1">Energy-coupling factor transporter ATP-binding protein EcfA2</fullName>
        <shortName evidence="1">ECF transporter A component EcfA2</shortName>
        <ecNumber evidence="1">7.-.-.-</ecNumber>
    </recommendedName>
</protein>
<feature type="chain" id="PRO_0000288007" description="Energy-coupling factor transporter ATP-binding protein EcfA2">
    <location>
        <begin position="1"/>
        <end position="279"/>
    </location>
</feature>
<feature type="domain" description="ABC transporter" evidence="1">
    <location>
        <begin position="3"/>
        <end position="245"/>
    </location>
</feature>
<feature type="binding site" evidence="1">
    <location>
        <begin position="40"/>
        <end position="47"/>
    </location>
    <ligand>
        <name>ATP</name>
        <dbReference type="ChEBI" id="CHEBI:30616"/>
    </ligand>
</feature>
<accession>A3CRB8</accession>
<gene>
    <name evidence="1" type="primary">ecfA2</name>
    <name type="synonym">cbiO2</name>
    <name type="ordered locus">SSA_2366</name>
</gene>
<proteinExistence type="inferred from homology"/>
<reference key="1">
    <citation type="journal article" date="2007" name="J. Bacteriol.">
        <title>Genome of the opportunistic pathogen Streptococcus sanguinis.</title>
        <authorList>
            <person name="Xu P."/>
            <person name="Alves J.M."/>
            <person name="Kitten T."/>
            <person name="Brown A."/>
            <person name="Chen Z."/>
            <person name="Ozaki L.S."/>
            <person name="Manque P."/>
            <person name="Ge X."/>
            <person name="Serrano M.G."/>
            <person name="Puiu D."/>
            <person name="Hendricks S."/>
            <person name="Wang Y."/>
            <person name="Chaplin M.D."/>
            <person name="Akan D."/>
            <person name="Paik S."/>
            <person name="Peterson D.L."/>
            <person name="Macrina F.L."/>
            <person name="Buck G.A."/>
        </authorList>
    </citation>
    <scope>NUCLEOTIDE SEQUENCE [LARGE SCALE GENOMIC DNA]</scope>
    <source>
        <strain>SK36</strain>
    </source>
</reference>
<dbReference type="EC" id="7.-.-.-" evidence="1"/>
<dbReference type="EMBL" id="CP000387">
    <property type="protein sequence ID" value="ABN45723.1"/>
    <property type="molecule type" value="Genomic_DNA"/>
</dbReference>
<dbReference type="RefSeq" id="WP_011837718.1">
    <property type="nucleotide sequence ID" value="NC_009009.1"/>
</dbReference>
<dbReference type="RefSeq" id="YP_001036273.1">
    <property type="nucleotide sequence ID" value="NC_009009.1"/>
</dbReference>
<dbReference type="SMR" id="A3CRB8"/>
<dbReference type="STRING" id="388919.SSA_2366"/>
<dbReference type="KEGG" id="ssa:SSA_2366"/>
<dbReference type="PATRIC" id="fig|388919.9.peg.2247"/>
<dbReference type="eggNOG" id="COG1122">
    <property type="taxonomic scope" value="Bacteria"/>
</dbReference>
<dbReference type="HOGENOM" id="CLU_000604_1_22_9"/>
<dbReference type="OrthoDB" id="9784332at2"/>
<dbReference type="Proteomes" id="UP000002148">
    <property type="component" value="Chromosome"/>
</dbReference>
<dbReference type="GO" id="GO:0043190">
    <property type="term" value="C:ATP-binding cassette (ABC) transporter complex"/>
    <property type="evidence" value="ECO:0007669"/>
    <property type="project" value="TreeGrafter"/>
</dbReference>
<dbReference type="GO" id="GO:0005524">
    <property type="term" value="F:ATP binding"/>
    <property type="evidence" value="ECO:0007669"/>
    <property type="project" value="UniProtKB-KW"/>
</dbReference>
<dbReference type="GO" id="GO:0016887">
    <property type="term" value="F:ATP hydrolysis activity"/>
    <property type="evidence" value="ECO:0007669"/>
    <property type="project" value="InterPro"/>
</dbReference>
<dbReference type="GO" id="GO:0042626">
    <property type="term" value="F:ATPase-coupled transmembrane transporter activity"/>
    <property type="evidence" value="ECO:0007669"/>
    <property type="project" value="TreeGrafter"/>
</dbReference>
<dbReference type="CDD" id="cd03225">
    <property type="entry name" value="ABC_cobalt_CbiO_domain1"/>
    <property type="match status" value="1"/>
</dbReference>
<dbReference type="FunFam" id="3.40.50.300:FF:000224">
    <property type="entry name" value="Energy-coupling factor transporter ATP-binding protein EcfA"/>
    <property type="match status" value="1"/>
</dbReference>
<dbReference type="Gene3D" id="3.40.50.300">
    <property type="entry name" value="P-loop containing nucleotide triphosphate hydrolases"/>
    <property type="match status" value="1"/>
</dbReference>
<dbReference type="InterPro" id="IPR003593">
    <property type="entry name" value="AAA+_ATPase"/>
</dbReference>
<dbReference type="InterPro" id="IPR003439">
    <property type="entry name" value="ABC_transporter-like_ATP-bd"/>
</dbReference>
<dbReference type="InterPro" id="IPR017871">
    <property type="entry name" value="ABC_transporter-like_CS"/>
</dbReference>
<dbReference type="InterPro" id="IPR015856">
    <property type="entry name" value="ABC_transpr_CbiO/EcfA_su"/>
</dbReference>
<dbReference type="InterPro" id="IPR050095">
    <property type="entry name" value="ECF_ABC_transporter_ATP-bd"/>
</dbReference>
<dbReference type="InterPro" id="IPR030946">
    <property type="entry name" value="EcfA2"/>
</dbReference>
<dbReference type="InterPro" id="IPR027417">
    <property type="entry name" value="P-loop_NTPase"/>
</dbReference>
<dbReference type="NCBIfam" id="TIGR04521">
    <property type="entry name" value="ECF_ATPase_2"/>
    <property type="match status" value="1"/>
</dbReference>
<dbReference type="PANTHER" id="PTHR43553:SF27">
    <property type="entry name" value="ENERGY-COUPLING FACTOR TRANSPORTER ATP-BINDING PROTEIN ECFA2"/>
    <property type="match status" value="1"/>
</dbReference>
<dbReference type="PANTHER" id="PTHR43553">
    <property type="entry name" value="HEAVY METAL TRANSPORTER"/>
    <property type="match status" value="1"/>
</dbReference>
<dbReference type="Pfam" id="PF00005">
    <property type="entry name" value="ABC_tran"/>
    <property type="match status" value="1"/>
</dbReference>
<dbReference type="SMART" id="SM00382">
    <property type="entry name" value="AAA"/>
    <property type="match status" value="1"/>
</dbReference>
<dbReference type="SUPFAM" id="SSF52540">
    <property type="entry name" value="P-loop containing nucleoside triphosphate hydrolases"/>
    <property type="match status" value="1"/>
</dbReference>
<dbReference type="PROSITE" id="PS00211">
    <property type="entry name" value="ABC_TRANSPORTER_1"/>
    <property type="match status" value="1"/>
</dbReference>
<dbReference type="PROSITE" id="PS50893">
    <property type="entry name" value="ABC_TRANSPORTER_2"/>
    <property type="match status" value="1"/>
</dbReference>
<dbReference type="PROSITE" id="PS51246">
    <property type="entry name" value="CBIO"/>
    <property type="match status" value="1"/>
</dbReference>
<evidence type="ECO:0000255" key="1">
    <source>
        <dbReference type="HAMAP-Rule" id="MF_01710"/>
    </source>
</evidence>
<organism>
    <name type="scientific">Streptococcus sanguinis (strain SK36)</name>
    <dbReference type="NCBI Taxonomy" id="388919"/>
    <lineage>
        <taxon>Bacteria</taxon>
        <taxon>Bacillati</taxon>
        <taxon>Bacillota</taxon>
        <taxon>Bacilli</taxon>
        <taxon>Lactobacillales</taxon>
        <taxon>Streptococcaceae</taxon>
        <taxon>Streptococcus</taxon>
    </lineage>
</organism>
<sequence>MGITLKNVSYTYQAGTPFEGPALFGVDLEIKSGSYTALIGHTGSGKSTILQLLNGLLVPNQGSVEVGSTVITADSVNKDIKQVRKKVGLVFQFPESQVFDETVLKDVAFGPQNFGVSKEEAEALAREKLHLVGISEDLFNRSPFELSGGQMRRVAIASILAMEPDILVLDEPTAGLDPSGRKELMRIFEELHRAGMTIVLVTHLMDDVANFADTVYVLDKGRVVKSGQPAQVFQDLDFMESIQLGVPKITKFAHELAEKGMNFSHYPITIEEFKEILHG</sequence>
<keyword id="KW-0067">ATP-binding</keyword>
<keyword id="KW-1003">Cell membrane</keyword>
<keyword id="KW-0472">Membrane</keyword>
<keyword id="KW-0547">Nucleotide-binding</keyword>
<keyword id="KW-1185">Reference proteome</keyword>
<keyword id="KW-1278">Translocase</keyword>
<keyword id="KW-0813">Transport</keyword>